<geneLocation type="chloroplast"/>
<evidence type="ECO:0000255" key="1">
    <source>
        <dbReference type="HAMAP-Rule" id="MF_00439"/>
    </source>
</evidence>
<organism>
    <name type="scientific">Ipomoea purpurea</name>
    <name type="common">Common morning glory</name>
    <name type="synonym">Pharbitis purpurea</name>
    <dbReference type="NCBI Taxonomy" id="4121"/>
    <lineage>
        <taxon>Eukaryota</taxon>
        <taxon>Viridiplantae</taxon>
        <taxon>Streptophyta</taxon>
        <taxon>Embryophyta</taxon>
        <taxon>Tracheophyta</taxon>
        <taxon>Spermatophyta</taxon>
        <taxon>Magnoliopsida</taxon>
        <taxon>eudicotyledons</taxon>
        <taxon>Gunneridae</taxon>
        <taxon>Pentapetalae</taxon>
        <taxon>asterids</taxon>
        <taxon>lamiids</taxon>
        <taxon>Solanales</taxon>
        <taxon>Convolvulaceae</taxon>
        <taxon>Ipomoeeae</taxon>
        <taxon>Ipomoea</taxon>
    </lineage>
</organism>
<accession>A7Y3D6</accession>
<proteinExistence type="inferred from homology"/>
<keyword id="KW-0150">Chloroplast</keyword>
<keyword id="KW-0472">Membrane</keyword>
<keyword id="KW-0602">Photosynthesis</keyword>
<keyword id="KW-0934">Plastid</keyword>
<keyword id="KW-0677">Repeat</keyword>
<keyword id="KW-0793">Thylakoid</keyword>
<keyword id="KW-0802">TPR repeat</keyword>
<name>YCF3_IPOPU</name>
<reference key="1">
    <citation type="journal article" date="2007" name="BMC Plant Biol.">
        <title>Complete plastid genome sequences suggest strong selection for retention of photosynthetic genes in the parasitic plant genus Cuscuta.</title>
        <authorList>
            <person name="McNeal J.R."/>
            <person name="Kuehl J.V."/>
            <person name="Boore J.L."/>
            <person name="dePamphilis C.W."/>
        </authorList>
    </citation>
    <scope>NUCLEOTIDE SEQUENCE [LARGE SCALE GENOMIC DNA]</scope>
</reference>
<comment type="function">
    <text evidence="1">Essential for the assembly of the photosystem I (PSI) complex. May act as a chaperone-like factor to guide the assembly of the PSI subunits.</text>
</comment>
<comment type="subcellular location">
    <subcellularLocation>
        <location evidence="1">Plastid</location>
        <location evidence="1">Chloroplast thylakoid membrane</location>
        <topology evidence="1">Peripheral membrane protein</topology>
    </subcellularLocation>
</comment>
<comment type="similarity">
    <text evidence="1">Belongs to the Ycf3 family.</text>
</comment>
<gene>
    <name evidence="1" type="primary">ycf3</name>
</gene>
<feature type="chain" id="PRO_0000325065" description="Photosystem I assembly protein Ycf3">
    <location>
        <begin position="1"/>
        <end position="168"/>
    </location>
</feature>
<feature type="repeat" description="TPR 1">
    <location>
        <begin position="35"/>
        <end position="68"/>
    </location>
</feature>
<feature type="repeat" description="TPR 2">
    <location>
        <begin position="72"/>
        <end position="105"/>
    </location>
</feature>
<feature type="repeat" description="TPR 3">
    <location>
        <begin position="120"/>
        <end position="153"/>
    </location>
</feature>
<sequence>MPRSRINGNFIDKTFSIVANILLRIIPTTSGEKEAFTYYRDGMSAQSEGNYAEALQNYYEAMRLEIDPYDRSYILYNIGLIHTSNGEHTKALEYYFRALERNPFLPQACNNMAVICHYRGEQAIQQGDSELAETWFDQAAEYWKQAIALTPGNYIEAHNWLKITGRFE</sequence>
<dbReference type="EMBL" id="EU118126">
    <property type="protein sequence ID" value="ABV02349.1"/>
    <property type="molecule type" value="Genomic_DNA"/>
</dbReference>
<dbReference type="RefSeq" id="YP_001468309.1">
    <property type="nucleotide sequence ID" value="NC_009808.1"/>
</dbReference>
<dbReference type="SMR" id="A7Y3D6"/>
<dbReference type="GeneID" id="5601278"/>
<dbReference type="GO" id="GO:0009535">
    <property type="term" value="C:chloroplast thylakoid membrane"/>
    <property type="evidence" value="ECO:0007669"/>
    <property type="project" value="UniProtKB-SubCell"/>
</dbReference>
<dbReference type="GO" id="GO:0015979">
    <property type="term" value="P:photosynthesis"/>
    <property type="evidence" value="ECO:0007669"/>
    <property type="project" value="UniProtKB-UniRule"/>
</dbReference>
<dbReference type="FunFam" id="1.25.40.10:FF:000004">
    <property type="entry name" value="Photosystem I assembly protein Ycf3"/>
    <property type="match status" value="1"/>
</dbReference>
<dbReference type="Gene3D" id="1.25.40.10">
    <property type="entry name" value="Tetratricopeptide repeat domain"/>
    <property type="match status" value="1"/>
</dbReference>
<dbReference type="HAMAP" id="MF_00439">
    <property type="entry name" value="Ycf3"/>
    <property type="match status" value="1"/>
</dbReference>
<dbReference type="InterPro" id="IPR022818">
    <property type="entry name" value="PSI_Ycf3_assembly"/>
</dbReference>
<dbReference type="InterPro" id="IPR011990">
    <property type="entry name" value="TPR-like_helical_dom_sf"/>
</dbReference>
<dbReference type="InterPro" id="IPR019734">
    <property type="entry name" value="TPR_rpt"/>
</dbReference>
<dbReference type="InterPro" id="IPR051685">
    <property type="entry name" value="Ycf3/AcsC/BcsC/TPR_MFPF"/>
</dbReference>
<dbReference type="NCBIfam" id="NF002725">
    <property type="entry name" value="PRK02603.1"/>
    <property type="match status" value="1"/>
</dbReference>
<dbReference type="PANTHER" id="PTHR44943">
    <property type="entry name" value="CELLULOSE SYNTHASE OPERON PROTEIN C"/>
    <property type="match status" value="1"/>
</dbReference>
<dbReference type="PANTHER" id="PTHR44943:SF8">
    <property type="entry name" value="TPR REPEAT-CONTAINING PROTEIN MJ0263"/>
    <property type="match status" value="1"/>
</dbReference>
<dbReference type="Pfam" id="PF00515">
    <property type="entry name" value="TPR_1"/>
    <property type="match status" value="1"/>
</dbReference>
<dbReference type="SMART" id="SM00028">
    <property type="entry name" value="TPR"/>
    <property type="match status" value="3"/>
</dbReference>
<dbReference type="SUPFAM" id="SSF48452">
    <property type="entry name" value="TPR-like"/>
    <property type="match status" value="1"/>
</dbReference>
<dbReference type="PROSITE" id="PS50005">
    <property type="entry name" value="TPR"/>
    <property type="match status" value="3"/>
</dbReference>
<dbReference type="PROSITE" id="PS50293">
    <property type="entry name" value="TPR_REGION"/>
    <property type="match status" value="2"/>
</dbReference>
<protein>
    <recommendedName>
        <fullName evidence="1">Photosystem I assembly protein Ycf3</fullName>
    </recommendedName>
</protein>